<dbReference type="EC" id="2.7.8.13" evidence="1"/>
<dbReference type="EMBL" id="AE007869">
    <property type="protein sequence ID" value="AAK87847.1"/>
    <property type="molecule type" value="Genomic_DNA"/>
</dbReference>
<dbReference type="PIR" id="AB2834">
    <property type="entry name" value="AB2834"/>
</dbReference>
<dbReference type="PIR" id="F97611">
    <property type="entry name" value="F97611"/>
</dbReference>
<dbReference type="RefSeq" id="NP_355062.1">
    <property type="nucleotide sequence ID" value="NC_003062.2"/>
</dbReference>
<dbReference type="RefSeq" id="WP_006310449.1">
    <property type="nucleotide sequence ID" value="NC_003062.2"/>
</dbReference>
<dbReference type="SMR" id="Q8UDM5"/>
<dbReference type="STRING" id="176299.Atu2097"/>
<dbReference type="EnsemblBacteria" id="AAK87847">
    <property type="protein sequence ID" value="AAK87847"/>
    <property type="gene ID" value="Atu2097"/>
</dbReference>
<dbReference type="GeneID" id="1134135"/>
<dbReference type="KEGG" id="atu:Atu2097"/>
<dbReference type="PATRIC" id="fig|176299.10.peg.2111"/>
<dbReference type="eggNOG" id="COG0472">
    <property type="taxonomic scope" value="Bacteria"/>
</dbReference>
<dbReference type="HOGENOM" id="CLU_023982_0_0_5"/>
<dbReference type="OrthoDB" id="9805475at2"/>
<dbReference type="PhylomeDB" id="Q8UDM5"/>
<dbReference type="BioCyc" id="AGRO:ATU2097-MONOMER"/>
<dbReference type="UniPathway" id="UPA00219"/>
<dbReference type="Proteomes" id="UP000000813">
    <property type="component" value="Chromosome circular"/>
</dbReference>
<dbReference type="GO" id="GO:0005886">
    <property type="term" value="C:plasma membrane"/>
    <property type="evidence" value="ECO:0007669"/>
    <property type="project" value="UniProtKB-SubCell"/>
</dbReference>
<dbReference type="GO" id="GO:0046872">
    <property type="term" value="F:metal ion binding"/>
    <property type="evidence" value="ECO:0007669"/>
    <property type="project" value="UniProtKB-KW"/>
</dbReference>
<dbReference type="GO" id="GO:0008963">
    <property type="term" value="F:phospho-N-acetylmuramoyl-pentapeptide-transferase activity"/>
    <property type="evidence" value="ECO:0007669"/>
    <property type="project" value="UniProtKB-UniRule"/>
</dbReference>
<dbReference type="GO" id="GO:0051992">
    <property type="term" value="F:UDP-N-acetylmuramoyl-L-alanyl-D-glutamyl-meso-2,6-diaminopimelyl-D-alanyl-D-alanine:undecaprenyl-phosphate transferase activity"/>
    <property type="evidence" value="ECO:0007669"/>
    <property type="project" value="RHEA"/>
</dbReference>
<dbReference type="GO" id="GO:0051301">
    <property type="term" value="P:cell division"/>
    <property type="evidence" value="ECO:0007669"/>
    <property type="project" value="UniProtKB-KW"/>
</dbReference>
<dbReference type="GO" id="GO:0071555">
    <property type="term" value="P:cell wall organization"/>
    <property type="evidence" value="ECO:0007669"/>
    <property type="project" value="UniProtKB-KW"/>
</dbReference>
<dbReference type="GO" id="GO:0009252">
    <property type="term" value="P:peptidoglycan biosynthetic process"/>
    <property type="evidence" value="ECO:0007669"/>
    <property type="project" value="UniProtKB-UniRule"/>
</dbReference>
<dbReference type="GO" id="GO:0008360">
    <property type="term" value="P:regulation of cell shape"/>
    <property type="evidence" value="ECO:0007669"/>
    <property type="project" value="UniProtKB-KW"/>
</dbReference>
<dbReference type="CDD" id="cd06852">
    <property type="entry name" value="GT_MraY"/>
    <property type="match status" value="1"/>
</dbReference>
<dbReference type="HAMAP" id="MF_00038">
    <property type="entry name" value="MraY"/>
    <property type="match status" value="1"/>
</dbReference>
<dbReference type="InterPro" id="IPR000715">
    <property type="entry name" value="Glycosyl_transferase_4"/>
</dbReference>
<dbReference type="InterPro" id="IPR003524">
    <property type="entry name" value="PNAcMuramoyl-5peptid_Trfase"/>
</dbReference>
<dbReference type="InterPro" id="IPR018480">
    <property type="entry name" value="PNAcMuramoyl-5peptid_Trfase_CS"/>
</dbReference>
<dbReference type="NCBIfam" id="TIGR00445">
    <property type="entry name" value="mraY"/>
    <property type="match status" value="1"/>
</dbReference>
<dbReference type="PANTHER" id="PTHR22926">
    <property type="entry name" value="PHOSPHO-N-ACETYLMURAMOYL-PENTAPEPTIDE-TRANSFERASE"/>
    <property type="match status" value="1"/>
</dbReference>
<dbReference type="PANTHER" id="PTHR22926:SF5">
    <property type="entry name" value="PHOSPHO-N-ACETYLMURAMOYL-PENTAPEPTIDE-TRANSFERASE HOMOLOG"/>
    <property type="match status" value="1"/>
</dbReference>
<dbReference type="Pfam" id="PF00953">
    <property type="entry name" value="Glycos_transf_4"/>
    <property type="match status" value="1"/>
</dbReference>
<dbReference type="Pfam" id="PF10555">
    <property type="entry name" value="MraY_sig1"/>
    <property type="match status" value="1"/>
</dbReference>
<dbReference type="PROSITE" id="PS01347">
    <property type="entry name" value="MRAY_1"/>
    <property type="match status" value="1"/>
</dbReference>
<dbReference type="PROSITE" id="PS01348">
    <property type="entry name" value="MRAY_2"/>
    <property type="match status" value="1"/>
</dbReference>
<organism>
    <name type="scientific">Agrobacterium fabrum (strain C58 / ATCC 33970)</name>
    <name type="common">Agrobacterium tumefaciens (strain C58)</name>
    <dbReference type="NCBI Taxonomy" id="176299"/>
    <lineage>
        <taxon>Bacteria</taxon>
        <taxon>Pseudomonadati</taxon>
        <taxon>Pseudomonadota</taxon>
        <taxon>Alphaproteobacteria</taxon>
        <taxon>Hyphomicrobiales</taxon>
        <taxon>Rhizobiaceae</taxon>
        <taxon>Rhizobium/Agrobacterium group</taxon>
        <taxon>Agrobacterium</taxon>
        <taxon>Agrobacterium tumefaciens complex</taxon>
    </lineage>
</organism>
<reference key="1">
    <citation type="journal article" date="2001" name="Science">
        <title>The genome of the natural genetic engineer Agrobacterium tumefaciens C58.</title>
        <authorList>
            <person name="Wood D.W."/>
            <person name="Setubal J.C."/>
            <person name="Kaul R."/>
            <person name="Monks D.E."/>
            <person name="Kitajima J.P."/>
            <person name="Okura V.K."/>
            <person name="Zhou Y."/>
            <person name="Chen L."/>
            <person name="Wood G.E."/>
            <person name="Almeida N.F. Jr."/>
            <person name="Woo L."/>
            <person name="Chen Y."/>
            <person name="Paulsen I.T."/>
            <person name="Eisen J.A."/>
            <person name="Karp P.D."/>
            <person name="Bovee D. Sr."/>
            <person name="Chapman P."/>
            <person name="Clendenning J."/>
            <person name="Deatherage G."/>
            <person name="Gillet W."/>
            <person name="Grant C."/>
            <person name="Kutyavin T."/>
            <person name="Levy R."/>
            <person name="Li M.-J."/>
            <person name="McClelland E."/>
            <person name="Palmieri A."/>
            <person name="Raymond C."/>
            <person name="Rouse G."/>
            <person name="Saenphimmachak C."/>
            <person name="Wu Z."/>
            <person name="Romero P."/>
            <person name="Gordon D."/>
            <person name="Zhang S."/>
            <person name="Yoo H."/>
            <person name="Tao Y."/>
            <person name="Biddle P."/>
            <person name="Jung M."/>
            <person name="Krespan W."/>
            <person name="Perry M."/>
            <person name="Gordon-Kamm B."/>
            <person name="Liao L."/>
            <person name="Kim S."/>
            <person name="Hendrick C."/>
            <person name="Zhao Z.-Y."/>
            <person name="Dolan M."/>
            <person name="Chumley F."/>
            <person name="Tingey S.V."/>
            <person name="Tomb J.-F."/>
            <person name="Gordon M.P."/>
            <person name="Olson M.V."/>
            <person name="Nester E.W."/>
        </authorList>
    </citation>
    <scope>NUCLEOTIDE SEQUENCE [LARGE SCALE GENOMIC DNA]</scope>
    <source>
        <strain>C58 / ATCC 33970</strain>
    </source>
</reference>
<reference key="2">
    <citation type="journal article" date="2001" name="Science">
        <title>Genome sequence of the plant pathogen and biotechnology agent Agrobacterium tumefaciens C58.</title>
        <authorList>
            <person name="Goodner B."/>
            <person name="Hinkle G."/>
            <person name="Gattung S."/>
            <person name="Miller N."/>
            <person name="Blanchard M."/>
            <person name="Qurollo B."/>
            <person name="Goldman B.S."/>
            <person name="Cao Y."/>
            <person name="Askenazi M."/>
            <person name="Halling C."/>
            <person name="Mullin L."/>
            <person name="Houmiel K."/>
            <person name="Gordon J."/>
            <person name="Vaudin M."/>
            <person name="Iartchouk O."/>
            <person name="Epp A."/>
            <person name="Liu F."/>
            <person name="Wollam C."/>
            <person name="Allinger M."/>
            <person name="Doughty D."/>
            <person name="Scott C."/>
            <person name="Lappas C."/>
            <person name="Markelz B."/>
            <person name="Flanagan C."/>
            <person name="Crowell C."/>
            <person name="Gurson J."/>
            <person name="Lomo C."/>
            <person name="Sear C."/>
            <person name="Strub G."/>
            <person name="Cielo C."/>
            <person name="Slater S."/>
        </authorList>
    </citation>
    <scope>NUCLEOTIDE SEQUENCE [LARGE SCALE GENOMIC DNA]</scope>
    <source>
        <strain>C58 / ATCC 33970</strain>
    </source>
</reference>
<evidence type="ECO:0000255" key="1">
    <source>
        <dbReference type="HAMAP-Rule" id="MF_00038"/>
    </source>
</evidence>
<name>MRAY_AGRFC</name>
<sequence length="366" mass="39127">MLIWLVELSDKVQLFNLFRYITFRAGAAMFTSALIVFLFGPAIINSLRVRQGKGQPIRADGPQTHFKKAGTPTMGGLMILAGILGGSLLWGDLSNVYVVAVLMVTLGFGAIGFYDDYLKVTKQSDKGFSGKARLGIEFLIAAIAVFFMMKMALASAPHGGTLGSSIAFPFFKEFVINLGYFFVLFGAFVIVGAGNAVNLTDGLDGLAIVPVMIAAATFGVIAYLAGNAVFANYLQINFVPGTGELAVIVGAVIGAGLGFLWFNAPPAAIFMGDTGSLALGGLIGSIAVATKHEIVMVIVGGLFVMETLSVIIQVFWFKRTGRRVFLMAPIHHHFEKKGWTESQVVIRFWIISVGLALLGLATLKLR</sequence>
<proteinExistence type="inferred from homology"/>
<feature type="chain" id="PRO_0000108769" description="Phospho-N-acetylmuramoyl-pentapeptide-transferase">
    <location>
        <begin position="1"/>
        <end position="366"/>
    </location>
</feature>
<feature type="transmembrane region" description="Helical" evidence="1">
    <location>
        <begin position="25"/>
        <end position="45"/>
    </location>
</feature>
<feature type="transmembrane region" description="Helical" evidence="1">
    <location>
        <begin position="70"/>
        <end position="90"/>
    </location>
</feature>
<feature type="transmembrane region" description="Helical" evidence="1">
    <location>
        <begin position="93"/>
        <end position="113"/>
    </location>
</feature>
<feature type="transmembrane region" description="Helical" evidence="1">
    <location>
        <begin position="134"/>
        <end position="154"/>
    </location>
</feature>
<feature type="transmembrane region" description="Helical" evidence="1">
    <location>
        <begin position="174"/>
        <end position="194"/>
    </location>
</feature>
<feature type="transmembrane region" description="Helical" evidence="1">
    <location>
        <begin position="205"/>
        <end position="225"/>
    </location>
</feature>
<feature type="transmembrane region" description="Helical" evidence="1">
    <location>
        <begin position="245"/>
        <end position="265"/>
    </location>
</feature>
<feature type="transmembrane region" description="Helical" evidence="1">
    <location>
        <begin position="268"/>
        <end position="288"/>
    </location>
</feature>
<feature type="transmembrane region" description="Helical" evidence="1">
    <location>
        <begin position="297"/>
        <end position="317"/>
    </location>
</feature>
<feature type="transmembrane region" description="Helical" evidence="1">
    <location>
        <begin position="343"/>
        <end position="363"/>
    </location>
</feature>
<comment type="function">
    <text evidence="1">Catalyzes the initial step of the lipid cycle reactions in the biosynthesis of the cell wall peptidoglycan: transfers peptidoglycan precursor phospho-MurNAc-pentapeptide from UDP-MurNAc-pentapeptide onto the lipid carrier undecaprenyl phosphate, yielding undecaprenyl-pyrophosphoryl-MurNAc-pentapeptide, known as lipid I.</text>
</comment>
<comment type="catalytic activity">
    <reaction evidence="1">
        <text>UDP-N-acetyl-alpha-D-muramoyl-L-alanyl-gamma-D-glutamyl-meso-2,6-diaminopimeloyl-D-alanyl-D-alanine + di-trans,octa-cis-undecaprenyl phosphate = di-trans,octa-cis-undecaprenyl diphospho-N-acetyl-alpha-D-muramoyl-L-alanyl-D-glutamyl-meso-2,6-diaminopimeloyl-D-alanyl-D-alanine + UMP</text>
        <dbReference type="Rhea" id="RHEA:28386"/>
        <dbReference type="ChEBI" id="CHEBI:57865"/>
        <dbReference type="ChEBI" id="CHEBI:60392"/>
        <dbReference type="ChEBI" id="CHEBI:61386"/>
        <dbReference type="ChEBI" id="CHEBI:61387"/>
        <dbReference type="EC" id="2.7.8.13"/>
    </reaction>
</comment>
<comment type="cofactor">
    <cofactor evidence="1">
        <name>Mg(2+)</name>
        <dbReference type="ChEBI" id="CHEBI:18420"/>
    </cofactor>
</comment>
<comment type="pathway">
    <text evidence="1">Cell wall biogenesis; peptidoglycan biosynthesis.</text>
</comment>
<comment type="subcellular location">
    <subcellularLocation>
        <location evidence="1">Cell inner membrane</location>
        <topology evidence="1">Multi-pass membrane protein</topology>
    </subcellularLocation>
</comment>
<comment type="similarity">
    <text evidence="1">Belongs to the glycosyltransferase 4 family. MraY subfamily.</text>
</comment>
<protein>
    <recommendedName>
        <fullName evidence="1">Phospho-N-acetylmuramoyl-pentapeptide-transferase</fullName>
        <ecNumber evidence="1">2.7.8.13</ecNumber>
    </recommendedName>
    <alternativeName>
        <fullName evidence="1">UDP-MurNAc-pentapeptide phosphotransferase</fullName>
    </alternativeName>
</protein>
<keyword id="KW-0131">Cell cycle</keyword>
<keyword id="KW-0132">Cell division</keyword>
<keyword id="KW-0997">Cell inner membrane</keyword>
<keyword id="KW-1003">Cell membrane</keyword>
<keyword id="KW-0133">Cell shape</keyword>
<keyword id="KW-0961">Cell wall biogenesis/degradation</keyword>
<keyword id="KW-0460">Magnesium</keyword>
<keyword id="KW-0472">Membrane</keyword>
<keyword id="KW-0479">Metal-binding</keyword>
<keyword id="KW-0573">Peptidoglycan synthesis</keyword>
<keyword id="KW-1185">Reference proteome</keyword>
<keyword id="KW-0808">Transferase</keyword>
<keyword id="KW-0812">Transmembrane</keyword>
<keyword id="KW-1133">Transmembrane helix</keyword>
<accession>Q8UDM5</accession>
<gene>
    <name evidence="1" type="primary">mraY</name>
    <name type="ordered locus">Atu2097</name>
    <name type="ORF">AGR_C_3805</name>
</gene>